<keyword id="KW-0002">3D-structure</keyword>
<keyword id="KW-0024">Alternative initiation</keyword>
<keyword id="KW-0025">Alternative splicing</keyword>
<keyword id="KW-1003">Cell membrane</keyword>
<keyword id="KW-0963">Cytoplasm</keyword>
<keyword id="KW-0968">Cytoplasmic vesicle</keyword>
<keyword id="KW-0449">Lipoprotein</keyword>
<keyword id="KW-0472">Membrane</keyword>
<keyword id="KW-0519">Myristate</keyword>
<keyword id="KW-0597">Phosphoprotein</keyword>
<keyword id="KW-1267">Proteomics identification</keyword>
<keyword id="KW-1185">Reference proteome</keyword>
<keyword id="KW-0727">SH2 domain</keyword>
<keyword id="KW-0728">SH3 domain</keyword>
<comment type="function">
    <text evidence="5">Adapter protein, which negatively regulates T-cell receptor (TCR) signaling. Inhibits T-cell antigen-receptor induced activation of nuclear factor of activated T-cells. May act by linking signaling proteins such as ZAP70 with CBL, leading to a CBL dependent degradation of signaling proteins.</text>
</comment>
<comment type="subunit">
    <text evidence="1 5">Interacts (via SH2 domain) with ZAP70 (phosphorylated) and CD3Z (phosphorylated). Interacts (via SH2 domain) with CSF1R (phosphorylated) (By similarity). Interacts (via its C-terminal domain) with CBL (phosphorylated).</text>
</comment>
<comment type="interaction">
    <interactant intactId="EBI-1222854">
        <id>Q9H6Q3</id>
    </interactant>
    <interactant intactId="EBI-641062">
        <id>P04626</id>
        <label>ERBB2</label>
    </interactant>
    <organismsDiffer>false</organismsDiffer>
    <experiments>2</experiments>
</comment>
<comment type="interaction">
    <interactant intactId="EBI-1222854">
        <id>Q9H6Q3</id>
    </interactant>
    <interactant intactId="EBI-517684">
        <id>Q13480</id>
        <label>GAB1</label>
    </interactant>
    <organismsDiffer>false</organismsDiffer>
    <experiments>4</experiments>
</comment>
<comment type="interaction">
    <interactant intactId="EBI-1222854">
        <id>Q9H6Q3</id>
    </interactant>
    <interactant intactId="EBI-1379503">
        <id>P10721</id>
        <label>KIT</label>
    </interactant>
    <organismsDiffer>false</organismsDiffer>
    <experiments>2</experiments>
</comment>
<comment type="interaction">
    <interactant intactId="EBI-1222854">
        <id>Q9H6Q3</id>
    </interactant>
    <interactant intactId="EBI-1039152">
        <id>P08581</id>
        <label>MET</label>
    </interactant>
    <organismsDiffer>false</organismsDiffer>
    <experiments>4</experiments>
</comment>
<comment type="interaction">
    <interactant intactId="EBI-1222854">
        <id>Q9H6Q3</id>
    </interactant>
    <interactant intactId="EBI-1383852">
        <id>P54646</id>
        <label>PRKAA2</label>
    </interactant>
    <organismsDiffer>false</organismsDiffer>
    <experiments>3</experiments>
</comment>
<comment type="interaction">
    <interactant intactId="EBI-1222854">
        <id>Q9H6Q3</id>
    </interactant>
    <interactant intactId="EBI-7353612">
        <id>P57075-2</id>
        <label>UBASH3A</label>
    </interactant>
    <organismsDiffer>false</organismsDiffer>
    <experiments>3</experiments>
</comment>
<comment type="subcellular location">
    <subcellularLocation>
        <location>Cytoplasm</location>
    </subcellularLocation>
</comment>
<comment type="subcellular location">
    <molecule>Isoform 1</molecule>
    <subcellularLocation>
        <location>Cell membrane</location>
    </subcellularLocation>
    <subcellularLocation>
        <location>Cytoplasmic vesicle</location>
    </subcellularLocation>
    <text>Localized to the plasma membrane and intracellular vesicles, including late endosomal vesicles.</text>
</comment>
<comment type="subcellular location">
    <molecule>Isoform 2</molecule>
    <subcellularLocation>
        <location evidence="6">Cytoplasm</location>
    </subcellularLocation>
    <text>May be cytoplasmic and is not localized to membranes.</text>
</comment>
<comment type="alternative products">
    <event type="alternative splicing"/>
    <event type="alternative initiation"/>
    <isoform>
        <id>Q9H6Q3-1</id>
        <name>1</name>
        <name>p28</name>
        <sequence type="displayed"/>
    </isoform>
    <isoform>
        <id>Q9H6Q3-2</id>
        <name>2</name>
        <name>p23</name>
        <name>SLAP-2-v</name>
        <name>MARS-v</name>
        <sequence type="described" ref="VSP_007240 VSP_007241"/>
    </isoform>
    <isoform>
        <id>Q9H6Q3-3</id>
        <name>3</name>
        <name>p25</name>
        <sequence type="described" ref="VSP_018794"/>
    </isoform>
    <isoform>
        <id>Q9H6Q3-4</id>
        <name>4</name>
        <name>p20</name>
        <sequence type="described" ref="VSP_018794 VSP_007240 VSP_007241"/>
    </isoform>
</comment>
<comment type="tissue specificity">
    <text>Predominantly expressed in immune system, with highest levels in peripheral blood leukocytes. Expressed in spleen, thymus and lymph nodes. Expressed in T-cells as well as in monocytes, and at low level in B-cells. Also detected in placenta, prostate, skin, retina and colon.</text>
</comment>
<comment type="domain">
    <text>The loss of the C-terminal domain partially abolishes the inhibitory function, but can be partially compensated by higher level of protein expression.</text>
</comment>
<comment type="PTM">
    <text evidence="1">Phosphorylated by CSF1R.</text>
</comment>
<comment type="miscellaneous">
    <molecule>Isoform 3</molecule>
    <text evidence="6">Produced by alternative initiation at Met-28 of isoform 1.</text>
</comment>
<comment type="miscellaneous">
    <molecule>Isoform 4</molecule>
    <text evidence="6">Produced by alternative initiation at Met-28 of isoform 2.</text>
</comment>
<organism>
    <name type="scientific">Homo sapiens</name>
    <name type="common">Human</name>
    <dbReference type="NCBI Taxonomy" id="9606"/>
    <lineage>
        <taxon>Eukaryota</taxon>
        <taxon>Metazoa</taxon>
        <taxon>Chordata</taxon>
        <taxon>Craniata</taxon>
        <taxon>Vertebrata</taxon>
        <taxon>Euteleostomi</taxon>
        <taxon>Mammalia</taxon>
        <taxon>Eutheria</taxon>
        <taxon>Euarchontoglires</taxon>
        <taxon>Primates</taxon>
        <taxon>Haplorrhini</taxon>
        <taxon>Catarrhini</taxon>
        <taxon>Hominidae</taxon>
        <taxon>Homo</taxon>
    </lineage>
</organism>
<gene>
    <name type="primary">SLA2</name>
    <name type="synonym">C20orf156</name>
    <name type="synonym">SLAP2</name>
</gene>
<proteinExistence type="evidence at protein level"/>
<name>SLAP2_HUMAN</name>
<sequence length="261" mass="28585">MGSLPSRRKSLPSPSLSSSVQGQGPVTMEAERSKATAVALGSFPAGGPAELSLRLGEPLTIVSEDGDWWTVLSEVSGREYNIPSVHVAKVSHGWLYEGLSREKAEELLLLPGNPGGAFLIRESQTRRGSYSLSVRLSRPASWDRIRHYRIHCLDNGWLYISPRLTFPSLQALVDHYSELADDICCLLKEPCVLQRAGPLPGKDIPLPVTVQRTPLNWKELDSSLLFSEAATGEESLLSEGLRESLSFYISLNDEAVSLDDA</sequence>
<dbReference type="EMBL" id="AF326353">
    <property type="protein sequence ID" value="AAL29204.1"/>
    <property type="molecule type" value="mRNA"/>
</dbReference>
<dbReference type="EMBL" id="AF290985">
    <property type="protein sequence ID" value="AAL38197.1"/>
    <property type="molecule type" value="mRNA"/>
</dbReference>
<dbReference type="EMBL" id="AF290986">
    <property type="protein sequence ID" value="AAL38198.1"/>
    <property type="molecule type" value="mRNA"/>
</dbReference>
<dbReference type="EMBL" id="AK025645">
    <property type="protein sequence ID" value="BAB15201.1"/>
    <property type="molecule type" value="mRNA"/>
</dbReference>
<dbReference type="EMBL" id="AK291513">
    <property type="protein sequence ID" value="BAF84202.1"/>
    <property type="molecule type" value="mRNA"/>
</dbReference>
<dbReference type="EMBL" id="AL031662">
    <property type="status" value="NOT_ANNOTATED_CDS"/>
    <property type="molecule type" value="Genomic_DNA"/>
</dbReference>
<dbReference type="EMBL" id="AL050318">
    <property type="status" value="NOT_ANNOTATED_CDS"/>
    <property type="molecule type" value="Genomic_DNA"/>
</dbReference>
<dbReference type="EMBL" id="CH471077">
    <property type="protein sequence ID" value="EAW76116.1"/>
    <property type="molecule type" value="Genomic_DNA"/>
</dbReference>
<dbReference type="EMBL" id="CH471077">
    <property type="protein sequence ID" value="EAW76117.1"/>
    <property type="molecule type" value="Genomic_DNA"/>
</dbReference>
<dbReference type="EMBL" id="CH471077">
    <property type="protein sequence ID" value="EAW76118.1"/>
    <property type="molecule type" value="Genomic_DNA"/>
</dbReference>
<dbReference type="EMBL" id="CH471077">
    <property type="protein sequence ID" value="EAW76119.1"/>
    <property type="molecule type" value="Genomic_DNA"/>
</dbReference>
<dbReference type="EMBL" id="BC042041">
    <property type="protein sequence ID" value="AAH42041.1"/>
    <property type="molecule type" value="mRNA"/>
</dbReference>
<dbReference type="CCDS" id="CCDS13282.1">
    <molecule id="Q9H6Q3-1"/>
</dbReference>
<dbReference type="CCDS" id="CCDS13283.1">
    <molecule id="Q9H6Q3-2"/>
</dbReference>
<dbReference type="RefSeq" id="NP_115590.1">
    <molecule id="Q9H6Q3-1"/>
    <property type="nucleotide sequence ID" value="NM_032214.4"/>
</dbReference>
<dbReference type="RefSeq" id="NP_778252.1">
    <molecule id="Q9H6Q3-2"/>
    <property type="nucleotide sequence ID" value="NM_175077.3"/>
</dbReference>
<dbReference type="PDB" id="4M4Z">
    <property type="method" value="X-ray"/>
    <property type="resolution" value="2.10 A"/>
    <property type="chains" value="A=29-193"/>
</dbReference>
<dbReference type="PDBsum" id="4M4Z"/>
<dbReference type="SMR" id="Q9H6Q3"/>
<dbReference type="BioGRID" id="123928">
    <property type="interactions" value="31"/>
</dbReference>
<dbReference type="ELM" id="Q9H6Q3"/>
<dbReference type="FunCoup" id="Q9H6Q3">
    <property type="interactions" value="512"/>
</dbReference>
<dbReference type="IntAct" id="Q9H6Q3">
    <property type="interactions" value="15"/>
</dbReference>
<dbReference type="MINT" id="Q9H6Q3"/>
<dbReference type="STRING" id="9606.ENSP00000262866"/>
<dbReference type="iPTMnet" id="Q9H6Q3"/>
<dbReference type="PhosphoSitePlus" id="Q9H6Q3"/>
<dbReference type="BioMuta" id="SLA2"/>
<dbReference type="DMDM" id="30173374"/>
<dbReference type="MassIVE" id="Q9H6Q3"/>
<dbReference type="PaxDb" id="9606-ENSP00000262866"/>
<dbReference type="PeptideAtlas" id="Q9H6Q3"/>
<dbReference type="ProteomicsDB" id="81005">
    <molecule id="Q9H6Q3-1"/>
</dbReference>
<dbReference type="ProteomicsDB" id="81006">
    <molecule id="Q9H6Q3-2"/>
</dbReference>
<dbReference type="ProteomicsDB" id="81007">
    <molecule id="Q9H6Q3-3"/>
</dbReference>
<dbReference type="ProteomicsDB" id="81008">
    <molecule id="Q9H6Q3-4"/>
</dbReference>
<dbReference type="Antibodypedia" id="26550">
    <property type="antibodies" value="453 antibodies from 23 providers"/>
</dbReference>
<dbReference type="DNASU" id="84174"/>
<dbReference type="Ensembl" id="ENST00000262866.9">
    <molecule id="Q9H6Q3-1"/>
    <property type="protein sequence ID" value="ENSP00000262866.4"/>
    <property type="gene ID" value="ENSG00000101082.14"/>
</dbReference>
<dbReference type="Ensembl" id="ENST00000360672.2">
    <molecule id="Q9H6Q3-2"/>
    <property type="protein sequence ID" value="ENSP00000353890.2"/>
    <property type="gene ID" value="ENSG00000101082.14"/>
</dbReference>
<dbReference type="GeneID" id="84174"/>
<dbReference type="KEGG" id="hsa:84174"/>
<dbReference type="MANE-Select" id="ENST00000262866.9">
    <property type="protein sequence ID" value="ENSP00000262866.4"/>
    <property type="RefSeq nucleotide sequence ID" value="NM_032214.4"/>
    <property type="RefSeq protein sequence ID" value="NP_115590.1"/>
</dbReference>
<dbReference type="UCSC" id="uc002xfu.4">
    <molecule id="Q9H6Q3-1"/>
    <property type="organism name" value="human"/>
</dbReference>
<dbReference type="AGR" id="HGNC:17329"/>
<dbReference type="CTD" id="84174"/>
<dbReference type="DisGeNET" id="84174"/>
<dbReference type="GeneCards" id="SLA2"/>
<dbReference type="HGNC" id="HGNC:17329">
    <property type="gene designation" value="SLA2"/>
</dbReference>
<dbReference type="HPA" id="ENSG00000101082">
    <property type="expression patterns" value="Tissue enhanced (bone marrow, lymphoid tissue)"/>
</dbReference>
<dbReference type="MIM" id="606577">
    <property type="type" value="gene"/>
</dbReference>
<dbReference type="neXtProt" id="NX_Q9H6Q3"/>
<dbReference type="OpenTargets" id="ENSG00000101082"/>
<dbReference type="PharmGKB" id="PA38231"/>
<dbReference type="VEuPathDB" id="HostDB:ENSG00000101082"/>
<dbReference type="eggNOG" id="ENOG502QPJN">
    <property type="taxonomic scope" value="Eukaryota"/>
</dbReference>
<dbReference type="GeneTree" id="ENSGT00940000160331"/>
<dbReference type="HOGENOM" id="CLU_084503_1_0_1"/>
<dbReference type="InParanoid" id="Q9H6Q3"/>
<dbReference type="OMA" id="QRAPLNW"/>
<dbReference type="OrthoDB" id="9924021at2759"/>
<dbReference type="PAN-GO" id="Q9H6Q3">
    <property type="GO annotations" value="3 GO annotations based on evolutionary models"/>
</dbReference>
<dbReference type="PhylomeDB" id="Q9H6Q3"/>
<dbReference type="TreeFam" id="TF354288"/>
<dbReference type="PathwayCommons" id="Q9H6Q3"/>
<dbReference type="Reactome" id="R-HSA-9706369">
    <property type="pathway name" value="Negative regulation of FLT3"/>
</dbReference>
<dbReference type="SignaLink" id="Q9H6Q3"/>
<dbReference type="SIGNOR" id="Q9H6Q3"/>
<dbReference type="BioGRID-ORCS" id="84174">
    <property type="hits" value="17 hits in 1151 CRISPR screens"/>
</dbReference>
<dbReference type="ChiTaRS" id="SLA2">
    <property type="organism name" value="human"/>
</dbReference>
<dbReference type="EvolutionaryTrace" id="Q9H6Q3"/>
<dbReference type="GeneWiki" id="SLA2"/>
<dbReference type="GenomeRNAi" id="84174"/>
<dbReference type="Pharos" id="Q9H6Q3">
    <property type="development level" value="Tbio"/>
</dbReference>
<dbReference type="PRO" id="PR:Q9H6Q3"/>
<dbReference type="Proteomes" id="UP000005640">
    <property type="component" value="Chromosome 20"/>
</dbReference>
<dbReference type="RNAct" id="Q9H6Q3">
    <property type="molecule type" value="protein"/>
</dbReference>
<dbReference type="Bgee" id="ENSG00000101082">
    <property type="expression patterns" value="Expressed in buccal mucosa cell and 124 other cell types or tissues"/>
</dbReference>
<dbReference type="GO" id="GO:0005737">
    <property type="term" value="C:cytoplasm"/>
    <property type="evidence" value="ECO:0000304"/>
    <property type="project" value="UniProtKB"/>
</dbReference>
<dbReference type="GO" id="GO:0005829">
    <property type="term" value="C:cytosol"/>
    <property type="evidence" value="ECO:0000304"/>
    <property type="project" value="Reactome"/>
</dbReference>
<dbReference type="GO" id="GO:0010008">
    <property type="term" value="C:endosome membrane"/>
    <property type="evidence" value="ECO:0000303"/>
    <property type="project" value="UniProtKB"/>
</dbReference>
<dbReference type="GO" id="GO:0005794">
    <property type="term" value="C:Golgi apparatus"/>
    <property type="evidence" value="ECO:0000314"/>
    <property type="project" value="HPA"/>
</dbReference>
<dbReference type="GO" id="GO:0043231">
    <property type="term" value="C:intracellular membrane-bounded organelle"/>
    <property type="evidence" value="ECO:0000314"/>
    <property type="project" value="HPA"/>
</dbReference>
<dbReference type="GO" id="GO:0005770">
    <property type="term" value="C:late endosome"/>
    <property type="evidence" value="ECO:0007669"/>
    <property type="project" value="Ensembl"/>
</dbReference>
<dbReference type="GO" id="GO:0005654">
    <property type="term" value="C:nucleoplasm"/>
    <property type="evidence" value="ECO:0000314"/>
    <property type="project" value="HPA"/>
</dbReference>
<dbReference type="GO" id="GO:0005886">
    <property type="term" value="C:plasma membrane"/>
    <property type="evidence" value="ECO:0000304"/>
    <property type="project" value="UniProtKB"/>
</dbReference>
<dbReference type="GO" id="GO:0035591">
    <property type="term" value="F:signaling adaptor activity"/>
    <property type="evidence" value="ECO:0000314"/>
    <property type="project" value="UniProtKB"/>
</dbReference>
<dbReference type="GO" id="GO:0050851">
    <property type="term" value="P:antigen receptor-mediated signaling pathway"/>
    <property type="evidence" value="ECO:0000304"/>
    <property type="project" value="UniProtKB"/>
</dbReference>
<dbReference type="GO" id="GO:0019724">
    <property type="term" value="P:B cell mediated immunity"/>
    <property type="evidence" value="ECO:0000304"/>
    <property type="project" value="UniProtKB"/>
</dbReference>
<dbReference type="GO" id="GO:0050849">
    <property type="term" value="P:negative regulation of calcium-mediated signaling"/>
    <property type="evidence" value="ECO:0000314"/>
    <property type="project" value="UniProtKB"/>
</dbReference>
<dbReference type="GO" id="GO:0050860">
    <property type="term" value="P:negative regulation of T cell receptor signaling pathway"/>
    <property type="evidence" value="ECO:0000315"/>
    <property type="project" value="UniProtKB"/>
</dbReference>
<dbReference type="GO" id="GO:0000122">
    <property type="term" value="P:negative regulation of transcription by RNA polymerase II"/>
    <property type="evidence" value="ECO:0000314"/>
    <property type="project" value="UniProtKB"/>
</dbReference>
<dbReference type="GO" id="GO:0050776">
    <property type="term" value="P:regulation of immune response"/>
    <property type="evidence" value="ECO:0000303"/>
    <property type="project" value="UniProtKB"/>
</dbReference>
<dbReference type="GO" id="GO:0042110">
    <property type="term" value="P:T cell activation"/>
    <property type="evidence" value="ECO:0000314"/>
    <property type="project" value="UniProtKB"/>
</dbReference>
<dbReference type="CDD" id="cd10344">
    <property type="entry name" value="SH2_SLAP"/>
    <property type="match status" value="1"/>
</dbReference>
<dbReference type="CDD" id="cd12011">
    <property type="entry name" value="SH3_SLAP2"/>
    <property type="match status" value="1"/>
</dbReference>
<dbReference type="FunFam" id="2.30.30.40:FF:000224">
    <property type="entry name" value="Src like adaptor 2"/>
    <property type="match status" value="1"/>
</dbReference>
<dbReference type="FunFam" id="3.30.505.10:FF:000064">
    <property type="entry name" value="src-like-adapter 2 isoform X2"/>
    <property type="match status" value="1"/>
</dbReference>
<dbReference type="Gene3D" id="3.30.505.10">
    <property type="entry name" value="SH2 domain"/>
    <property type="match status" value="1"/>
</dbReference>
<dbReference type="Gene3D" id="2.30.30.40">
    <property type="entry name" value="SH3 Domains"/>
    <property type="match status" value="1"/>
</dbReference>
<dbReference type="InterPro" id="IPR043539">
    <property type="entry name" value="Grb2-like"/>
</dbReference>
<dbReference type="InterPro" id="IPR000980">
    <property type="entry name" value="SH2"/>
</dbReference>
<dbReference type="InterPro" id="IPR036860">
    <property type="entry name" value="SH2_dom_sf"/>
</dbReference>
<dbReference type="InterPro" id="IPR036028">
    <property type="entry name" value="SH3-like_dom_sf"/>
</dbReference>
<dbReference type="InterPro" id="IPR001452">
    <property type="entry name" value="SH3_domain"/>
</dbReference>
<dbReference type="InterPro" id="IPR035052">
    <property type="entry name" value="SLAP_SH2"/>
</dbReference>
<dbReference type="PANTHER" id="PTHR46037">
    <property type="entry name" value="PROTEIN ENHANCER OF SEVENLESS 2B"/>
    <property type="match status" value="1"/>
</dbReference>
<dbReference type="Pfam" id="PF00017">
    <property type="entry name" value="SH2"/>
    <property type="match status" value="1"/>
</dbReference>
<dbReference type="Pfam" id="PF00018">
    <property type="entry name" value="SH3_1"/>
    <property type="match status" value="1"/>
</dbReference>
<dbReference type="PRINTS" id="PR00401">
    <property type="entry name" value="SH2DOMAIN"/>
</dbReference>
<dbReference type="SMART" id="SM00252">
    <property type="entry name" value="SH2"/>
    <property type="match status" value="1"/>
</dbReference>
<dbReference type="SMART" id="SM00326">
    <property type="entry name" value="SH3"/>
    <property type="match status" value="1"/>
</dbReference>
<dbReference type="SUPFAM" id="SSF55550">
    <property type="entry name" value="SH2 domain"/>
    <property type="match status" value="1"/>
</dbReference>
<dbReference type="SUPFAM" id="SSF50044">
    <property type="entry name" value="SH3-domain"/>
    <property type="match status" value="1"/>
</dbReference>
<dbReference type="PROSITE" id="PS50001">
    <property type="entry name" value="SH2"/>
    <property type="match status" value="1"/>
</dbReference>
<dbReference type="PROSITE" id="PS50002">
    <property type="entry name" value="SH3"/>
    <property type="match status" value="1"/>
</dbReference>
<feature type="initiator methionine" description="Removed">
    <location>
        <position position="1"/>
    </location>
</feature>
<feature type="chain" id="PRO_0000022351" description="Src-like-adapter 2">
    <location>
        <begin position="2"/>
        <end position="261"/>
    </location>
</feature>
<feature type="domain" description="SH3" evidence="3">
    <location>
        <begin position="32"/>
        <end position="92"/>
    </location>
</feature>
<feature type="domain" description="SH2" evidence="2">
    <location>
        <begin position="94"/>
        <end position="191"/>
    </location>
</feature>
<feature type="region of interest" description="Disordered" evidence="4">
    <location>
        <begin position="1"/>
        <end position="31"/>
    </location>
</feature>
<feature type="region of interest" description="SLA C-terminal">
    <location>
        <begin position="195"/>
        <end position="261"/>
    </location>
</feature>
<feature type="compositionally biased region" description="Basic residues" evidence="4">
    <location>
        <begin position="1"/>
        <end position="10"/>
    </location>
</feature>
<feature type="lipid moiety-binding region" description="N-myristoyl glycine" evidence="5">
    <location>
        <position position="2"/>
    </location>
</feature>
<feature type="splice variant" id="VSP_018794" description="In isoform 3 and isoform 4." evidence="6">
    <location>
        <begin position="1"/>
        <end position="27"/>
    </location>
</feature>
<feature type="splice variant" id="VSP_007240" description="In isoform 2 and isoform 4." evidence="6">
    <original>LADDICCLLKEPCVLQRAGPLPGKDIPLPVTV</original>
    <variation>GWPAPWQGYTPTCDCAEDTTQLERAGQLPPVF</variation>
    <location>
        <begin position="179"/>
        <end position="210"/>
    </location>
</feature>
<feature type="splice variant" id="VSP_007241" description="In isoform 2 and isoform 4." evidence="6">
    <location>
        <begin position="211"/>
        <end position="261"/>
    </location>
</feature>
<feature type="sequence variant" id="VAR_051361" description="In dbSNP:rs34834764.">
    <original>V</original>
    <variation>M</variation>
    <location>
        <position position="210"/>
    </location>
</feature>
<feature type="mutagenesis site" description="Abolishes localization to membranes." evidence="5">
    <original>G</original>
    <variation>A</variation>
    <location>
        <position position="2"/>
    </location>
</feature>
<feature type="strand" evidence="7">
    <location>
        <begin position="37"/>
        <end position="39"/>
    </location>
</feature>
<feature type="strand" evidence="7">
    <location>
        <begin position="58"/>
        <end position="65"/>
    </location>
</feature>
<feature type="strand" evidence="7">
    <location>
        <begin position="68"/>
        <end position="73"/>
    </location>
</feature>
<feature type="turn" evidence="7">
    <location>
        <begin position="74"/>
        <end position="76"/>
    </location>
</feature>
<feature type="strand" evidence="7">
    <location>
        <begin position="79"/>
        <end position="83"/>
    </location>
</feature>
<feature type="helix" evidence="7">
    <location>
        <begin position="84"/>
        <end position="86"/>
    </location>
</feature>
<feature type="strand" evidence="7">
    <location>
        <begin position="87"/>
        <end position="91"/>
    </location>
</feature>
<feature type="turn" evidence="7">
    <location>
        <begin position="92"/>
        <end position="94"/>
    </location>
</feature>
<feature type="strand" evidence="7">
    <location>
        <begin position="95"/>
        <end position="98"/>
    </location>
</feature>
<feature type="helix" evidence="7">
    <location>
        <begin position="101"/>
        <end position="108"/>
    </location>
</feature>
<feature type="strand" evidence="7">
    <location>
        <begin position="118"/>
        <end position="122"/>
    </location>
</feature>
<feature type="strand" evidence="7">
    <location>
        <begin position="124"/>
        <end position="128"/>
    </location>
</feature>
<feature type="strand" evidence="7">
    <location>
        <begin position="130"/>
        <end position="135"/>
    </location>
</feature>
<feature type="strand" evidence="7">
    <location>
        <begin position="145"/>
        <end position="152"/>
    </location>
</feature>
<feature type="strand" evidence="7">
    <location>
        <begin position="158"/>
        <end position="161"/>
    </location>
</feature>
<feature type="strand" evidence="7">
    <location>
        <begin position="164"/>
        <end position="168"/>
    </location>
</feature>
<feature type="helix" evidence="7">
    <location>
        <begin position="169"/>
        <end position="176"/>
    </location>
</feature>
<protein>
    <recommendedName>
        <fullName>Src-like-adapter 2</fullName>
    </recommendedName>
    <alternativeName>
        <fullName>Modulator of antigen receptor signaling</fullName>
        <shortName>MARS</shortName>
    </alternativeName>
    <alternativeName>
        <fullName>Src-like adapter protein 2</fullName>
        <shortName>SLAP-2</shortName>
    </alternativeName>
</protein>
<reference key="1">
    <citation type="journal article" date="2001" name="J. Exp. Med.">
        <title>Functional cloning of Src-like adapter protein-2 (SLAP-2), a novel inhibitor of antigen receptor signaling.</title>
        <authorList>
            <person name="Holland S.J."/>
            <person name="Liao X.C."/>
            <person name="Mendenhall M.K."/>
            <person name="Zhou X."/>
            <person name="Pardo J."/>
            <person name="Chu P."/>
            <person name="Spencer C."/>
            <person name="Fu A.C."/>
            <person name="Sheng N."/>
            <person name="Yu P."/>
            <person name="Pali E."/>
            <person name="Nagin A."/>
            <person name="Shen M."/>
            <person name="Yu S."/>
            <person name="Chan E."/>
            <person name="Wu X."/>
            <person name="Li C."/>
            <person name="Woisetschlager M."/>
            <person name="Aversa G."/>
            <person name="Kolbinger F."/>
            <person name="Bennett M.K."/>
            <person name="Molineaux S."/>
            <person name="Luo Y."/>
            <person name="Payan D.G."/>
            <person name="Mancebo H.S.Y."/>
            <person name="Wu J."/>
        </authorList>
    </citation>
    <scope>NUCLEOTIDE SEQUENCE (ISOFORM 1)</scope>
    <scope>CHARACTERIZATION</scope>
    <scope>FUNCTION</scope>
    <scope>MYRISTOYLATION AT GLY-2</scope>
    <scope>INTERACTION WITH CBL</scope>
    <scope>MUTAGENESIS OF GLY-2</scope>
</reference>
<reference key="2">
    <citation type="journal article" date="2003" name="Oncogene">
        <title>Cloning and characterization of human Src-like adaptor protein 2 and a novel splice isoform, SLAP-2-v.</title>
        <authorList>
            <person name="Loreto M.P."/>
            <person name="McGlade C.J."/>
        </authorList>
    </citation>
    <scope>NUCLEOTIDE SEQUENCE (ISOFORMS 1; 2; 3 AND 4)</scope>
    <scope>ALTERNATIVE INITIATION</scope>
    <source>
        <tissue>Thymus</tissue>
    </source>
</reference>
<reference key="3">
    <citation type="journal article" date="2004" name="Nat. Genet.">
        <title>Complete sequencing and characterization of 21,243 full-length human cDNAs.</title>
        <authorList>
            <person name="Ota T."/>
            <person name="Suzuki Y."/>
            <person name="Nishikawa T."/>
            <person name="Otsuki T."/>
            <person name="Sugiyama T."/>
            <person name="Irie R."/>
            <person name="Wakamatsu A."/>
            <person name="Hayashi K."/>
            <person name="Sato H."/>
            <person name="Nagai K."/>
            <person name="Kimura K."/>
            <person name="Makita H."/>
            <person name="Sekine M."/>
            <person name="Obayashi M."/>
            <person name="Nishi T."/>
            <person name="Shibahara T."/>
            <person name="Tanaka T."/>
            <person name="Ishii S."/>
            <person name="Yamamoto J."/>
            <person name="Saito K."/>
            <person name="Kawai Y."/>
            <person name="Isono Y."/>
            <person name="Nakamura Y."/>
            <person name="Nagahari K."/>
            <person name="Murakami K."/>
            <person name="Yasuda T."/>
            <person name="Iwayanagi T."/>
            <person name="Wagatsuma M."/>
            <person name="Shiratori A."/>
            <person name="Sudo H."/>
            <person name="Hosoiri T."/>
            <person name="Kaku Y."/>
            <person name="Kodaira H."/>
            <person name="Kondo H."/>
            <person name="Sugawara M."/>
            <person name="Takahashi M."/>
            <person name="Kanda K."/>
            <person name="Yokoi T."/>
            <person name="Furuya T."/>
            <person name="Kikkawa E."/>
            <person name="Omura Y."/>
            <person name="Abe K."/>
            <person name="Kamihara K."/>
            <person name="Katsuta N."/>
            <person name="Sato K."/>
            <person name="Tanikawa M."/>
            <person name="Yamazaki M."/>
            <person name="Ninomiya K."/>
            <person name="Ishibashi T."/>
            <person name="Yamashita H."/>
            <person name="Murakawa K."/>
            <person name="Fujimori K."/>
            <person name="Tanai H."/>
            <person name="Kimata M."/>
            <person name="Watanabe M."/>
            <person name="Hiraoka S."/>
            <person name="Chiba Y."/>
            <person name="Ishida S."/>
            <person name="Ono Y."/>
            <person name="Takiguchi S."/>
            <person name="Watanabe S."/>
            <person name="Yosida M."/>
            <person name="Hotuta T."/>
            <person name="Kusano J."/>
            <person name="Kanehori K."/>
            <person name="Takahashi-Fujii A."/>
            <person name="Hara H."/>
            <person name="Tanase T.-O."/>
            <person name="Nomura Y."/>
            <person name="Togiya S."/>
            <person name="Komai F."/>
            <person name="Hara R."/>
            <person name="Takeuchi K."/>
            <person name="Arita M."/>
            <person name="Imose N."/>
            <person name="Musashino K."/>
            <person name="Yuuki H."/>
            <person name="Oshima A."/>
            <person name="Sasaki N."/>
            <person name="Aotsuka S."/>
            <person name="Yoshikawa Y."/>
            <person name="Matsunawa H."/>
            <person name="Ichihara T."/>
            <person name="Shiohata N."/>
            <person name="Sano S."/>
            <person name="Moriya S."/>
            <person name="Momiyama H."/>
            <person name="Satoh N."/>
            <person name="Takami S."/>
            <person name="Terashima Y."/>
            <person name="Suzuki O."/>
            <person name="Nakagawa S."/>
            <person name="Senoh A."/>
            <person name="Mizoguchi H."/>
            <person name="Goto Y."/>
            <person name="Shimizu F."/>
            <person name="Wakebe H."/>
            <person name="Hishigaki H."/>
            <person name="Watanabe T."/>
            <person name="Sugiyama A."/>
            <person name="Takemoto M."/>
            <person name="Kawakami B."/>
            <person name="Yamazaki M."/>
            <person name="Watanabe K."/>
            <person name="Kumagai A."/>
            <person name="Itakura S."/>
            <person name="Fukuzumi Y."/>
            <person name="Fujimori Y."/>
            <person name="Komiyama M."/>
            <person name="Tashiro H."/>
            <person name="Tanigami A."/>
            <person name="Fujiwara T."/>
            <person name="Ono T."/>
            <person name="Yamada K."/>
            <person name="Fujii Y."/>
            <person name="Ozaki K."/>
            <person name="Hirao M."/>
            <person name="Ohmori Y."/>
            <person name="Kawabata A."/>
            <person name="Hikiji T."/>
            <person name="Kobatake N."/>
            <person name="Inagaki H."/>
            <person name="Ikema Y."/>
            <person name="Okamoto S."/>
            <person name="Okitani R."/>
            <person name="Kawakami T."/>
            <person name="Noguchi S."/>
            <person name="Itoh T."/>
            <person name="Shigeta K."/>
            <person name="Senba T."/>
            <person name="Matsumura K."/>
            <person name="Nakajima Y."/>
            <person name="Mizuno T."/>
            <person name="Morinaga M."/>
            <person name="Sasaki M."/>
            <person name="Togashi T."/>
            <person name="Oyama M."/>
            <person name="Hata H."/>
            <person name="Watanabe M."/>
            <person name="Komatsu T."/>
            <person name="Mizushima-Sugano J."/>
            <person name="Satoh T."/>
            <person name="Shirai Y."/>
            <person name="Takahashi Y."/>
            <person name="Nakagawa K."/>
            <person name="Okumura K."/>
            <person name="Nagase T."/>
            <person name="Nomura N."/>
            <person name="Kikuchi H."/>
            <person name="Masuho Y."/>
            <person name="Yamashita R."/>
            <person name="Nakai K."/>
            <person name="Yada T."/>
            <person name="Nakamura Y."/>
            <person name="Ohara O."/>
            <person name="Isogai T."/>
            <person name="Sugano S."/>
        </authorList>
    </citation>
    <scope>NUCLEOTIDE SEQUENCE [LARGE SCALE MRNA] (ISOFORM 1)</scope>
    <source>
        <tissue>Hepatoma</tissue>
    </source>
</reference>
<reference key="4">
    <citation type="journal article" date="2001" name="Nature">
        <title>The DNA sequence and comparative analysis of human chromosome 20.</title>
        <authorList>
            <person name="Deloukas P."/>
            <person name="Matthews L.H."/>
            <person name="Ashurst J.L."/>
            <person name="Burton J."/>
            <person name="Gilbert J.G.R."/>
            <person name="Jones M."/>
            <person name="Stavrides G."/>
            <person name="Almeida J.P."/>
            <person name="Babbage A.K."/>
            <person name="Bagguley C.L."/>
            <person name="Bailey J."/>
            <person name="Barlow K.F."/>
            <person name="Bates K.N."/>
            <person name="Beard L.M."/>
            <person name="Beare D.M."/>
            <person name="Beasley O.P."/>
            <person name="Bird C.P."/>
            <person name="Blakey S.E."/>
            <person name="Bridgeman A.M."/>
            <person name="Brown A.J."/>
            <person name="Buck D."/>
            <person name="Burrill W.D."/>
            <person name="Butler A.P."/>
            <person name="Carder C."/>
            <person name="Carter N.P."/>
            <person name="Chapman J.C."/>
            <person name="Clamp M."/>
            <person name="Clark G."/>
            <person name="Clark L.N."/>
            <person name="Clark S.Y."/>
            <person name="Clee C.M."/>
            <person name="Clegg S."/>
            <person name="Cobley V.E."/>
            <person name="Collier R.E."/>
            <person name="Connor R.E."/>
            <person name="Corby N.R."/>
            <person name="Coulson A."/>
            <person name="Coville G.J."/>
            <person name="Deadman R."/>
            <person name="Dhami P.D."/>
            <person name="Dunn M."/>
            <person name="Ellington A.G."/>
            <person name="Frankland J.A."/>
            <person name="Fraser A."/>
            <person name="French L."/>
            <person name="Garner P."/>
            <person name="Grafham D.V."/>
            <person name="Griffiths C."/>
            <person name="Griffiths M.N.D."/>
            <person name="Gwilliam R."/>
            <person name="Hall R.E."/>
            <person name="Hammond S."/>
            <person name="Harley J.L."/>
            <person name="Heath P.D."/>
            <person name="Ho S."/>
            <person name="Holden J.L."/>
            <person name="Howden P.J."/>
            <person name="Huckle E."/>
            <person name="Hunt A.R."/>
            <person name="Hunt S.E."/>
            <person name="Jekosch K."/>
            <person name="Johnson C.M."/>
            <person name="Johnson D."/>
            <person name="Kay M.P."/>
            <person name="Kimberley A.M."/>
            <person name="King A."/>
            <person name="Knights A."/>
            <person name="Laird G.K."/>
            <person name="Lawlor S."/>
            <person name="Lehvaeslaiho M.H."/>
            <person name="Leversha M.A."/>
            <person name="Lloyd C."/>
            <person name="Lloyd D.M."/>
            <person name="Lovell J.D."/>
            <person name="Marsh V.L."/>
            <person name="Martin S.L."/>
            <person name="McConnachie L.J."/>
            <person name="McLay K."/>
            <person name="McMurray A.A."/>
            <person name="Milne S.A."/>
            <person name="Mistry D."/>
            <person name="Moore M.J.F."/>
            <person name="Mullikin J.C."/>
            <person name="Nickerson T."/>
            <person name="Oliver K."/>
            <person name="Parker A."/>
            <person name="Patel R."/>
            <person name="Pearce T.A.V."/>
            <person name="Peck A.I."/>
            <person name="Phillimore B.J.C.T."/>
            <person name="Prathalingam S.R."/>
            <person name="Plumb R.W."/>
            <person name="Ramsay H."/>
            <person name="Rice C.M."/>
            <person name="Ross M.T."/>
            <person name="Scott C.E."/>
            <person name="Sehra H.K."/>
            <person name="Shownkeen R."/>
            <person name="Sims S."/>
            <person name="Skuce C.D."/>
            <person name="Smith M.L."/>
            <person name="Soderlund C."/>
            <person name="Steward C.A."/>
            <person name="Sulston J.E."/>
            <person name="Swann R.M."/>
            <person name="Sycamore N."/>
            <person name="Taylor R."/>
            <person name="Tee L."/>
            <person name="Thomas D.W."/>
            <person name="Thorpe A."/>
            <person name="Tracey A."/>
            <person name="Tromans A.C."/>
            <person name="Vaudin M."/>
            <person name="Wall M."/>
            <person name="Wallis J.M."/>
            <person name="Whitehead S.L."/>
            <person name="Whittaker P."/>
            <person name="Willey D.L."/>
            <person name="Williams L."/>
            <person name="Williams S.A."/>
            <person name="Wilming L."/>
            <person name="Wray P.W."/>
            <person name="Hubbard T."/>
            <person name="Durbin R.M."/>
            <person name="Bentley D.R."/>
            <person name="Beck S."/>
            <person name="Rogers J."/>
        </authorList>
    </citation>
    <scope>NUCLEOTIDE SEQUENCE [LARGE SCALE GENOMIC DNA]</scope>
</reference>
<reference key="5">
    <citation type="submission" date="2005-09" db="EMBL/GenBank/DDBJ databases">
        <authorList>
            <person name="Mural R.J."/>
            <person name="Istrail S."/>
            <person name="Sutton G.G."/>
            <person name="Florea L."/>
            <person name="Halpern A.L."/>
            <person name="Mobarry C.M."/>
            <person name="Lippert R."/>
            <person name="Walenz B."/>
            <person name="Shatkay H."/>
            <person name="Dew I."/>
            <person name="Miller J.R."/>
            <person name="Flanigan M.J."/>
            <person name="Edwards N.J."/>
            <person name="Bolanos R."/>
            <person name="Fasulo D."/>
            <person name="Halldorsson B.V."/>
            <person name="Hannenhalli S."/>
            <person name="Turner R."/>
            <person name="Yooseph S."/>
            <person name="Lu F."/>
            <person name="Nusskern D.R."/>
            <person name="Shue B.C."/>
            <person name="Zheng X.H."/>
            <person name="Zhong F."/>
            <person name="Delcher A.L."/>
            <person name="Huson D.H."/>
            <person name="Kravitz S.A."/>
            <person name="Mouchard L."/>
            <person name="Reinert K."/>
            <person name="Remington K.A."/>
            <person name="Clark A.G."/>
            <person name="Waterman M.S."/>
            <person name="Eichler E.E."/>
            <person name="Adams M.D."/>
            <person name="Hunkapiller M.W."/>
            <person name="Myers E.W."/>
            <person name="Venter J.C."/>
        </authorList>
    </citation>
    <scope>NUCLEOTIDE SEQUENCE [LARGE SCALE GENOMIC DNA]</scope>
</reference>
<reference key="6">
    <citation type="journal article" date="2004" name="Genome Res.">
        <title>The status, quality, and expansion of the NIH full-length cDNA project: the Mammalian Gene Collection (MGC).</title>
        <authorList>
            <consortium name="The MGC Project Team"/>
        </authorList>
    </citation>
    <scope>NUCLEOTIDE SEQUENCE [LARGE SCALE MRNA]</scope>
    <source>
        <tissue>Prostate</tissue>
    </source>
</reference>
<reference key="7">
    <citation type="journal article" date="2002" name="J. Biol. Chem.">
        <title>A novel Src homology 2 domain-containing molecule, Src-like adapter protein-2 (SLAP-2), which negatively regulates T cell receptor signaling.</title>
        <authorList>
            <person name="Pandey A."/>
            <person name="Ibarrola N."/>
            <person name="Kratchmarova I."/>
            <person name="Fernandez M.M."/>
            <person name="Constantinescu S.N."/>
            <person name="Ohara O."/>
            <person name="Sawasdikosol S."/>
            <person name="Lodish H.F."/>
            <person name="Mann M."/>
        </authorList>
    </citation>
    <scope>CHARACTERIZATION</scope>
</reference>
<evidence type="ECO:0000250" key="1"/>
<evidence type="ECO:0000255" key="2">
    <source>
        <dbReference type="PROSITE-ProRule" id="PRU00191"/>
    </source>
</evidence>
<evidence type="ECO:0000255" key="3">
    <source>
        <dbReference type="PROSITE-ProRule" id="PRU00192"/>
    </source>
</evidence>
<evidence type="ECO:0000256" key="4">
    <source>
        <dbReference type="SAM" id="MobiDB-lite"/>
    </source>
</evidence>
<evidence type="ECO:0000269" key="5">
    <source>
    </source>
</evidence>
<evidence type="ECO:0000305" key="6"/>
<evidence type="ECO:0007829" key="7">
    <source>
        <dbReference type="PDB" id="4M4Z"/>
    </source>
</evidence>
<accession>Q9H6Q3</accession>
<accession>A8K648</accession>
<accession>E1P5U1</accession>
<accession>E1P5U2</accession>
<accession>Q5TH27</accession>
<accession>Q5TH28</accession>
<accession>Q8WY18</accession>
<accession>Q96QI4</accession>
<accession>Q9H135</accession>